<dbReference type="EC" id="7.1.1.2"/>
<dbReference type="EMBL" id="Y16067">
    <property type="protein sequence ID" value="CAA76029.1"/>
    <property type="molecule type" value="Genomic_DNA"/>
</dbReference>
<dbReference type="PIR" id="T11310">
    <property type="entry name" value="T11310"/>
</dbReference>
<dbReference type="RefSeq" id="NP_007624.1">
    <property type="nucleotide sequence ID" value="NC_001950.1"/>
</dbReference>
<dbReference type="SMR" id="O79411"/>
<dbReference type="GeneID" id="808303"/>
<dbReference type="CTD" id="4540"/>
<dbReference type="OrthoDB" id="10069788at2759"/>
<dbReference type="GO" id="GO:0005743">
    <property type="term" value="C:mitochondrial inner membrane"/>
    <property type="evidence" value="ECO:0007669"/>
    <property type="project" value="UniProtKB-SubCell"/>
</dbReference>
<dbReference type="GO" id="GO:0008137">
    <property type="term" value="F:NADH dehydrogenase (ubiquinone) activity"/>
    <property type="evidence" value="ECO:0007669"/>
    <property type="project" value="UniProtKB-EC"/>
</dbReference>
<dbReference type="GO" id="GO:0042773">
    <property type="term" value="P:ATP synthesis coupled electron transport"/>
    <property type="evidence" value="ECO:0007669"/>
    <property type="project" value="InterPro"/>
</dbReference>
<dbReference type="GO" id="GO:0015990">
    <property type="term" value="P:electron transport coupled proton transport"/>
    <property type="evidence" value="ECO:0007669"/>
    <property type="project" value="TreeGrafter"/>
</dbReference>
<dbReference type="InterPro" id="IPR010934">
    <property type="entry name" value="NADH_DH_su5_C"/>
</dbReference>
<dbReference type="InterPro" id="IPR018393">
    <property type="entry name" value="NADHpl_OxRdtase_5_subgr"/>
</dbReference>
<dbReference type="InterPro" id="IPR001750">
    <property type="entry name" value="ND/Mrp_TM"/>
</dbReference>
<dbReference type="InterPro" id="IPR003945">
    <property type="entry name" value="NU5C-like"/>
</dbReference>
<dbReference type="InterPro" id="IPR001516">
    <property type="entry name" value="Proton_antipo_N"/>
</dbReference>
<dbReference type="NCBIfam" id="TIGR01974">
    <property type="entry name" value="NDH_I_L"/>
    <property type="match status" value="1"/>
</dbReference>
<dbReference type="PANTHER" id="PTHR42829">
    <property type="entry name" value="NADH-UBIQUINONE OXIDOREDUCTASE CHAIN 5"/>
    <property type="match status" value="1"/>
</dbReference>
<dbReference type="PANTHER" id="PTHR42829:SF2">
    <property type="entry name" value="NADH-UBIQUINONE OXIDOREDUCTASE CHAIN 5"/>
    <property type="match status" value="1"/>
</dbReference>
<dbReference type="Pfam" id="PF06455">
    <property type="entry name" value="NADH5_C"/>
    <property type="match status" value="1"/>
</dbReference>
<dbReference type="Pfam" id="PF00361">
    <property type="entry name" value="Proton_antipo_M"/>
    <property type="match status" value="1"/>
</dbReference>
<dbReference type="Pfam" id="PF00662">
    <property type="entry name" value="Proton_antipo_N"/>
    <property type="match status" value="1"/>
</dbReference>
<dbReference type="PRINTS" id="PR01434">
    <property type="entry name" value="NADHDHGNASE5"/>
</dbReference>
<gene>
    <name type="primary">MT-ND5</name>
    <name type="synonym">MTND5</name>
    <name type="synonym">NADH5</name>
    <name type="synonym">ND5</name>
</gene>
<keyword id="KW-0249">Electron transport</keyword>
<keyword id="KW-0472">Membrane</keyword>
<keyword id="KW-0496">Mitochondrion</keyword>
<keyword id="KW-0999">Mitochondrion inner membrane</keyword>
<keyword id="KW-0520">NAD</keyword>
<keyword id="KW-0679">Respiratory chain</keyword>
<keyword id="KW-1278">Translocase</keyword>
<keyword id="KW-0812">Transmembrane</keyword>
<keyword id="KW-1133">Transmembrane helix</keyword>
<keyword id="KW-0813">Transport</keyword>
<keyword id="KW-0830">Ubiquinone</keyword>
<organism>
    <name type="scientific">Scyliorhinus canicula</name>
    <name type="common">Small-spotted catshark</name>
    <name type="synonym">Squalus canicula</name>
    <dbReference type="NCBI Taxonomy" id="7830"/>
    <lineage>
        <taxon>Eukaryota</taxon>
        <taxon>Metazoa</taxon>
        <taxon>Chordata</taxon>
        <taxon>Craniata</taxon>
        <taxon>Vertebrata</taxon>
        <taxon>Chondrichthyes</taxon>
        <taxon>Elasmobranchii</taxon>
        <taxon>Galeomorphii</taxon>
        <taxon>Galeoidea</taxon>
        <taxon>Carcharhiniformes</taxon>
        <taxon>Scyliorhinidae</taxon>
        <taxon>Scyliorhinus</taxon>
    </lineage>
</organism>
<comment type="function">
    <text evidence="1">Core subunit of the mitochondrial membrane respiratory chain NADH dehydrogenase (Complex I) that is believed to belong to the minimal assembly required for catalysis. Complex I functions in the transfer of electrons from NADH to the respiratory chain. The immediate electron acceptor for the enzyme is believed to be ubiquinone (By similarity).</text>
</comment>
<comment type="catalytic activity">
    <reaction>
        <text>a ubiquinone + NADH + 5 H(+)(in) = a ubiquinol + NAD(+) + 4 H(+)(out)</text>
        <dbReference type="Rhea" id="RHEA:29091"/>
        <dbReference type="Rhea" id="RHEA-COMP:9565"/>
        <dbReference type="Rhea" id="RHEA-COMP:9566"/>
        <dbReference type="ChEBI" id="CHEBI:15378"/>
        <dbReference type="ChEBI" id="CHEBI:16389"/>
        <dbReference type="ChEBI" id="CHEBI:17976"/>
        <dbReference type="ChEBI" id="CHEBI:57540"/>
        <dbReference type="ChEBI" id="CHEBI:57945"/>
        <dbReference type="EC" id="7.1.1.2"/>
    </reaction>
</comment>
<comment type="subcellular location">
    <subcellularLocation>
        <location evidence="1">Mitochondrion inner membrane</location>
        <topology evidence="1">Multi-pass membrane protein</topology>
    </subcellularLocation>
</comment>
<comment type="similarity">
    <text evidence="3">Belongs to the complex I subunit 5 family.</text>
</comment>
<feature type="chain" id="PRO_0000118148" description="NADH-ubiquinone oxidoreductase chain 5">
    <location>
        <begin position="1"/>
        <end position="609"/>
    </location>
</feature>
<feature type="transmembrane region" description="Helical" evidence="2">
    <location>
        <begin position="4"/>
        <end position="24"/>
    </location>
</feature>
<feature type="transmembrane region" description="Helical" evidence="2">
    <location>
        <begin position="44"/>
        <end position="64"/>
    </location>
</feature>
<feature type="transmembrane region" description="Helical" evidence="2">
    <location>
        <begin position="89"/>
        <end position="109"/>
    </location>
</feature>
<feature type="transmembrane region" description="Helical" evidence="2">
    <location>
        <begin position="119"/>
        <end position="139"/>
    </location>
</feature>
<feature type="transmembrane region" description="Helical" evidence="2">
    <location>
        <begin position="140"/>
        <end position="160"/>
    </location>
</feature>
<feature type="transmembrane region" description="Helical" evidence="2">
    <location>
        <begin position="173"/>
        <end position="193"/>
    </location>
</feature>
<feature type="transmembrane region" description="Helical" evidence="2">
    <location>
        <begin position="212"/>
        <end position="232"/>
    </location>
</feature>
<feature type="transmembrane region" description="Helical" evidence="2">
    <location>
        <begin position="244"/>
        <end position="264"/>
    </location>
</feature>
<feature type="transmembrane region" description="Helical" evidence="2">
    <location>
        <begin position="275"/>
        <end position="295"/>
    </location>
</feature>
<feature type="transmembrane region" description="Helical" evidence="2">
    <location>
        <begin position="304"/>
        <end position="324"/>
    </location>
</feature>
<feature type="transmembrane region" description="Helical" evidence="2">
    <location>
        <begin position="327"/>
        <end position="347"/>
    </location>
</feature>
<feature type="transmembrane region" description="Helical" evidence="2">
    <location>
        <begin position="373"/>
        <end position="393"/>
    </location>
</feature>
<feature type="transmembrane region" description="Helical" evidence="2">
    <location>
        <begin position="407"/>
        <end position="427"/>
    </location>
</feature>
<feature type="transmembrane region" description="Helical" evidence="2">
    <location>
        <begin position="451"/>
        <end position="471"/>
    </location>
</feature>
<feature type="transmembrane region" description="Helical" evidence="2">
    <location>
        <begin position="485"/>
        <end position="505"/>
    </location>
</feature>
<feature type="transmembrane region" description="Helical" evidence="2">
    <location>
        <begin position="589"/>
        <end position="609"/>
    </location>
</feature>
<geneLocation type="mitochondrion"/>
<name>NU5M_SCYCA</name>
<proteinExistence type="inferred from homology"/>
<evidence type="ECO:0000250" key="1"/>
<evidence type="ECO:0000255" key="2"/>
<evidence type="ECO:0000305" key="3"/>
<accession>O79411</accession>
<reference key="1">
    <citation type="journal article" date="1998" name="Genetics">
        <title>The complete nucleotide sequence of the mitochondrial DNA of the dogfish, Scyliorhinus canicula.</title>
        <authorList>
            <person name="Delarbre C."/>
            <person name="Spruyt N."/>
            <person name="Delmarre C."/>
            <person name="Gallut C."/>
            <person name="Barriel V."/>
            <person name="Janvier P."/>
            <person name="Laudet V."/>
            <person name="Gachelin G."/>
        </authorList>
    </citation>
    <scope>NUCLEOTIDE SEQUENCE [GENOMIC DNA]</scope>
    <source>
        <tissue>Muscle</tissue>
    </source>
</reference>
<protein>
    <recommendedName>
        <fullName>NADH-ubiquinone oxidoreductase chain 5</fullName>
        <ecNumber>7.1.1.2</ecNumber>
    </recommendedName>
    <alternativeName>
        <fullName>NADH dehydrogenase subunit 5</fullName>
    </alternativeName>
</protein>
<sequence>MNTIFNSSFLLIFITLMIPLVTSLSPKKLNPSPSSFYVKTAVKISFFISLIPLFIFLDQGLESIVTNWNWMNMGPFNINMSFKFDLYSIMFTPVALYVTWSILEFALWYMHLDPNINRFFKYLLLFLISMIILVTANNMFQLFIGWEGVGIMSFLLIGWWYSRTDANTAALQAVIYNRIGDIGLILSMAWLAMNLNSWEIQQIFILSKDKDLTLPLLGLVLAAAGKSAQFGLHPWLPSAMEGPTPVSALLHSSTMVVAGIFLLIRLHPLIQDNQFILTTCLCLGAITTLFTATCALTQNDIKKIIAFSTSSQLGLMMVTIGLNQPQLAFLHICTHAFFKAMLFLCSGSIIHSLNDEQDIRKMGGLHKLLPFTSSSLTVGSLALTGMPFLSGFFSKDAIIEAMNTSHLNAWALILTLVATSFTAIYSLRLIFFTLMKFPRFNSFSPINENNPMVINPLKRLAYGSIIAGLIITSNLPPAKTQIMTMSPLLKLSALLVTILGLLLALELTNLTHSQFKIYPTFPYHHFSNMLGYFPPIIHRLLPKINLNWAQHISTHLIDQTWNEKIGPKSTLIQQIPLIKLSTHPQQGYIKTYLTLLFLTLTLIILVVFI</sequence>